<comment type="function">
    <molecule>Met-enkephalin</molecule>
    <text evidence="1">Neuropeptide that competes with and mimic the effects of opiate drugs. They play a role in a number of physiologic functions, including pain perception and responses to stress.</text>
</comment>
<comment type="function">
    <molecule>Leu-enkephalin</molecule>
    <text evidence="1">Neuropeptide that competes with and mimic the effects of opiate drugs. They play a role in a number of physiologic functions, including pain perception and responses to stress.</text>
</comment>
<comment type="function">
    <molecule>Met-enkephalin-Arg-Phe</molecule>
    <text evidence="3 11">Met-enkephalin-Arg-Phe neuropeptide acts as a strong ligand of Mu-type opioid receptor OPRM1 (PubMed:8624732). Met-enkephalin-Arg-Phe-binding to OPRM1 in the nucleus accumbens of the brain increases activation of OPRM1, leading to long-term synaptic depression of glutamate release (By similarity).</text>
</comment>
<comment type="function">
    <molecule>PENK(114-133)</molecule>
    <text evidence="6">Increases glutamate release in the striatum and decreases GABA concentration in the striatum.</text>
</comment>
<comment type="function">
    <molecule>PENK(239-260)</molecule>
    <text evidence="6">Increases glutamate release in the striatum.</text>
</comment>
<comment type="subcellular location">
    <subcellularLocation>
        <location evidence="6">Secreted</location>
    </subcellularLocation>
    <subcellularLocation>
        <location evidence="2">Cytoplasmic vesicle</location>
        <location evidence="2">Secretory vesicle</location>
        <location evidence="2">Chromaffin granule lumen</location>
    </subcellularLocation>
</comment>
<comment type="tissue specificity">
    <text evidence="8 9 10">Expressed in brain, heart and testis.</text>
</comment>
<comment type="PTM">
    <text evidence="2">Proenkephalin-A is cleaved by CTSL to generate Met-enkephalin.</text>
</comment>
<comment type="PTM">
    <molecule>Met-enkephalin</molecule>
    <text evidence="1">Processed and degraded by ACE.</text>
</comment>
<comment type="PTM">
    <molecule>Leu-enkephalin</molecule>
    <text evidence="1">Processed and degraded by ACE.</text>
</comment>
<comment type="PTM">
    <molecule>Met-enkephalin-Arg-Gly-Leu</molecule>
    <text evidence="1">Probably cleaved by ACE.</text>
</comment>
<comment type="PTM">
    <molecule>Met-enkephalin-Arg-Phe</molecule>
    <text evidence="7">Processed by ACE to generate Met-enkephalin in the nucleus accumbens of the brain.</text>
</comment>
<comment type="PTM">
    <text evidence="1">The N-terminal domain contains 6 conserved cysteines thought to be involved in disulfide bonding and/or processing.</text>
</comment>
<comment type="mass spectrometry" mass="2203.971" method="Electrospray" evidence="6">
    <molecule>PENK(114-133)</molecule>
</comment>
<comment type="mass spectrometry" mass="4592.8" method="Electrospray" evidence="6">
    <molecule>PENK(143-185)</molecule>
</comment>
<comment type="mass spectrometry" mass="2504.027" method="Electrospray" evidence="6">
    <molecule>PENK(239-260)</molecule>
</comment>
<comment type="similarity">
    <text evidence="13">Belongs to the opioid neuropeptide precursor family.</text>
</comment>
<proteinExistence type="evidence at protein level"/>
<feature type="signal peptide" evidence="4">
    <location>
        <begin position="1"/>
        <end position="24"/>
    </location>
</feature>
<feature type="peptide" id="PRO_0000008281" description="Synenkephalin">
    <location>
        <begin position="25"/>
        <end position="97"/>
    </location>
</feature>
<feature type="peptide" id="PRO_0000008282" description="Met-enkephalin">
    <location>
        <begin position="100"/>
        <end position="104"/>
    </location>
</feature>
<feature type="peptide" id="PRO_0000008283" description="Met-enkephalin">
    <location>
        <begin position="107"/>
        <end position="111"/>
    </location>
</feature>
<feature type="peptide" id="PRO_0000008284" description="PENK(114-133)" evidence="6">
    <location>
        <begin position="114"/>
        <end position="133"/>
    </location>
</feature>
<feature type="peptide" id="PRO_0000008285" description="Met-enkephalin">
    <location>
        <begin position="136"/>
        <end position="140"/>
    </location>
</feature>
<feature type="peptide" id="PRO_0000008286" description="PENK(143-185)" evidence="6">
    <location>
        <begin position="143"/>
        <end position="185"/>
    </location>
</feature>
<feature type="peptide" id="PRO_0000008287" description="Met-enkephalin-Arg-Gly-Leu">
    <location>
        <begin position="188"/>
        <end position="195"/>
    </location>
</feature>
<feature type="propeptide" id="PRO_0000008288">
    <location>
        <begin position="198"/>
        <end position="209"/>
    </location>
</feature>
<feature type="peptide" id="PRO_0000008289" description="Met-enkephalin">
    <location>
        <begin position="212"/>
        <end position="216"/>
    </location>
</feature>
<feature type="propeptide" id="PRO_0000008290">
    <location>
        <begin position="219"/>
        <end position="229"/>
    </location>
</feature>
<feature type="peptide" id="PRO_0000008291" description="Leu-enkephalin">
    <location>
        <begin position="232"/>
        <end position="236"/>
    </location>
</feature>
<feature type="peptide" id="PRO_0000008292" description="PENK(239-260)" evidence="6">
    <location>
        <begin position="239"/>
        <end position="260"/>
    </location>
</feature>
<feature type="peptide" id="PRO_0000008293" description="Met-enkephalin-Arg-Phe" evidence="7">
    <location>
        <begin position="263"/>
        <end position="269"/>
    </location>
</feature>
<feature type="region of interest" description="Disordered" evidence="5">
    <location>
        <begin position="165"/>
        <end position="191"/>
    </location>
</feature>
<feature type="site" description="Cleavage; by CTSL" evidence="2">
    <location>
        <begin position="111"/>
        <end position="112"/>
    </location>
</feature>
<feature type="site" description="Cleavage; by CTSL" evidence="2">
    <location>
        <begin position="112"/>
        <end position="113"/>
    </location>
</feature>
<feature type="site" description="Cleavage; by CTSL" evidence="2">
    <location>
        <begin position="133"/>
        <end position="134"/>
    </location>
</feature>
<feature type="site" description="Cleavage; by CTSL" evidence="2">
    <location>
        <begin position="216"/>
        <end position="217"/>
    </location>
</feature>
<feature type="site" description="Cleavage; by CTSL" evidence="2">
    <location>
        <begin position="217"/>
        <end position="218"/>
    </location>
</feature>
<feature type="site" description="Cleavage; by CTSL" evidence="2">
    <location>
        <begin position="220"/>
        <end position="221"/>
    </location>
</feature>
<feature type="modified residue" description="Phosphoserine" evidence="14">
    <location>
        <position position="253"/>
    </location>
</feature>
<feature type="disulfide bond" evidence="1">
    <location>
        <begin position="26"/>
        <end position="48"/>
    </location>
</feature>
<feature type="disulfide bond" evidence="1">
    <location>
        <begin position="30"/>
        <end position="52"/>
    </location>
</feature>
<feature type="disulfide bond" evidence="1">
    <location>
        <begin position="33"/>
        <end position="65"/>
    </location>
</feature>
<feature type="sequence conflict" description="In Ref. 2; AAA60734 and 5; CAA68804." evidence="13" ref="2 5">
    <original>L</original>
    <variation>V</variation>
    <location>
        <position position="12"/>
    </location>
</feature>
<organism>
    <name type="scientific">Rattus norvegicus</name>
    <name type="common">Rat</name>
    <dbReference type="NCBI Taxonomy" id="10116"/>
    <lineage>
        <taxon>Eukaryota</taxon>
        <taxon>Metazoa</taxon>
        <taxon>Chordata</taxon>
        <taxon>Craniata</taxon>
        <taxon>Vertebrata</taxon>
        <taxon>Euteleostomi</taxon>
        <taxon>Mammalia</taxon>
        <taxon>Eutheria</taxon>
        <taxon>Euarchontoglires</taxon>
        <taxon>Glires</taxon>
        <taxon>Rodentia</taxon>
        <taxon>Myomorpha</taxon>
        <taxon>Muroidea</taxon>
        <taxon>Muridae</taxon>
        <taxon>Murinae</taxon>
        <taxon>Rattus</taxon>
    </lineage>
</organism>
<gene>
    <name type="primary">Penk</name>
    <name type="synonym">Penk-rs</name>
    <name type="synonym">Penk1</name>
</gene>
<protein>
    <recommendedName>
        <fullName>Proenkephalin-A</fullName>
    </recommendedName>
    <component>
        <recommendedName>
            <fullName>Synenkephalin</fullName>
        </recommendedName>
    </component>
    <component>
        <recommendedName>
            <fullName>Met-enkephalin</fullName>
        </recommendedName>
        <alternativeName>
            <fullName>Opioid growth factor</fullName>
            <shortName>OGF</shortName>
        </alternativeName>
    </component>
    <component>
        <recommendedName>
            <fullName>PENK(114-133)</fullName>
        </recommendedName>
    </component>
    <component>
        <recommendedName>
            <fullName>PENK(143-185)</fullName>
        </recommendedName>
    </component>
    <component>
        <recommendedName>
            <fullName>Met-enkephalin-Arg-Gly-Leu</fullName>
        </recommendedName>
    </component>
    <component>
        <recommendedName>
            <fullName>Leu-enkephalin</fullName>
        </recommendedName>
    </component>
    <component>
        <recommendedName>
            <fullName>PENK(239-260)</fullName>
        </recommendedName>
    </component>
    <component>
        <recommendedName>
            <fullName evidence="12">Met-enkephalin-Arg-Phe</fullName>
        </recommendedName>
    </component>
</protein>
<reference key="1">
    <citation type="journal article" date="1984" name="J. Biol. Chem.">
        <title>Rat brain preproenkephalin mRNA. cDNA cloning, primary structure, and distribution in the central nervous system.</title>
        <authorList>
            <person name="Yoshikawa K."/>
            <person name="Williams C."/>
            <person name="Sabol S.L."/>
        </authorList>
    </citation>
    <scope>NUCLEOTIDE SEQUENCE [MRNA]</scope>
    <scope>TISSUE SPECIFICITY</scope>
    <source>
        <strain>Fischer 344</strain>
        <tissue>Brain</tissue>
    </source>
</reference>
<reference key="2">
    <citation type="journal article" date="1984" name="J. Biol. Chem.">
        <title>Isolation and characterization of the rat proenkephalin gene.</title>
        <authorList>
            <person name="Rosen H."/>
            <person name="Douglass J."/>
            <person name="Herbert E."/>
        </authorList>
    </citation>
    <scope>NUCLEOTIDE SEQUENCE [GENOMIC DNA]</scope>
    <source>
        <strain>Fischer 344</strain>
    </source>
</reference>
<reference key="3">
    <citation type="journal article" date="1984" name="Proc. Natl. Acad. Sci. U.S.A.">
        <title>Molecular cloning and sequence determination of rat preproenkephalin cDNA: sensitive probe for studying transcriptional changes in rat tissues.</title>
        <authorList>
            <person name="Howells R.D."/>
            <person name="Kilpatrick D.L."/>
            <person name="Bhatt R."/>
            <person name="Monahan J.J."/>
            <person name="Poonian M."/>
            <person name="Udenfriend S."/>
        </authorList>
    </citation>
    <scope>NUCLEOTIDE SEQUENCE [MRNA]</scope>
    <scope>TISSUE SPECIFICITY</scope>
    <source>
        <strain>Fischer 344</strain>
        <tissue>Brain</tissue>
    </source>
</reference>
<reference key="4">
    <citation type="journal article" date="1986" name="NIDA Res. Monogr.">
        <title>Proenkephalin biosynthesis in the rat.</title>
        <authorList>
            <person name="Howells R.D."/>
        </authorList>
    </citation>
    <scope>NUCLEOTIDE SEQUENCE [MRNA]</scope>
    <source>
        <tissue>Brain</tissue>
    </source>
</reference>
<reference key="5">
    <citation type="journal article" date="1989" name="FEBS Lett.">
        <title>A new species of enkephalin precursor mRNA with a distinct 5'-untranslated region in haploid germ cells.</title>
        <authorList>
            <person name="Yoshikawa K."/>
            <person name="Maruyama K."/>
            <person name="Aizawa T."/>
            <person name="Yamamoto A."/>
        </authorList>
    </citation>
    <scope>NUCLEOTIDE SEQUENCE [MRNA]</scope>
    <scope>TISSUE SPECIFICITY</scope>
    <source>
        <strain>Wistar</strain>
        <tissue>Testis</tissue>
    </source>
</reference>
<reference key="6">
    <citation type="journal article" date="1992" name="Regul. Pept.">
        <title>Molecular cloning, sequence analysis and translation of proenkephalin mRNA from rat heart.</title>
        <authorList>
            <person name="Rao S.M."/>
            <person name="Howells R.D."/>
        </authorList>
    </citation>
    <scope>NUCLEOTIDE SEQUENCE [MRNA]</scope>
    <source>
        <tissue>Heart</tissue>
    </source>
</reference>
<reference key="7">
    <citation type="journal article" date="2004" name="Genome Res.">
        <title>The status, quality, and expansion of the NIH full-length cDNA project: the Mammalian Gene Collection (MGC).</title>
        <authorList>
            <consortium name="The MGC Project Team"/>
        </authorList>
    </citation>
    <scope>NUCLEOTIDE SEQUENCE [LARGE SCALE MRNA]</scope>
    <source>
        <tissue>Testis</tissue>
    </source>
</reference>
<reference key="8">
    <citation type="journal article" date="2009" name="Mol. Cell. Proteomics">
        <title>Discovering new bioactive neuropeptides in the striatum secretome using in vivo microdialysis and versatile proteomics.</title>
        <authorList>
            <person name="Bernay B."/>
            <person name="Gaillard M.-C."/>
            <person name="Guryca V."/>
            <person name="Emadali A."/>
            <person name="Kuhn L."/>
            <person name="Bertrand A."/>
            <person name="Detraz I."/>
            <person name="Carcenac C."/>
            <person name="Savasta M."/>
            <person name="Brouillet E."/>
            <person name="Garin J."/>
            <person name="Elalouf J.-M."/>
        </authorList>
    </citation>
    <scope>PROTEIN SEQUENCE OF 114-133; 143-185 AND 239-260</scope>
    <scope>FUNCTION</scope>
    <scope>MASS SPECTROMETRY</scope>
    <scope>SUBCELLULAR LOCATION</scope>
    <source>
        <strain>Wistar</strain>
        <tissue>Corpus striatum</tissue>
    </source>
</reference>
<reference key="9">
    <citation type="journal article" date="1982" name="Neurochem. Int.">
        <title>Separate metabolic pathways for Leu-enkephalin and Met-enkephalin-Arg(6)-Phe(7) degradation by rat striatal synaptosomal membranes.</title>
        <authorList>
            <person name="Benuck M."/>
            <person name="Berg M.J."/>
            <person name="Marks N."/>
        </authorList>
    </citation>
    <scope>PROTEOLYTIC CLEAVAGE (MET-ENKEPHALIN-ARG-PHE)</scope>
</reference>
<reference key="10">
    <citation type="journal article" date="1995" name="Brain Res.">
        <title>The cloned mu, delta and kappa receptors and their endogenous ligands: evidence for two opioid peptide recognition cores.</title>
        <authorList>
            <person name="Mansour A."/>
            <person name="Hoversten M.T."/>
            <person name="Taylor L.P."/>
            <person name="Watson S.J."/>
            <person name="Akil H."/>
        </authorList>
    </citation>
    <scope>FUNCTION (MET-ENKEPHALIN-ARG-PHE)</scope>
</reference>
<reference key="11">
    <citation type="journal article" date="2012" name="Nat. Commun.">
        <title>Quantitative maps of protein phosphorylation sites across 14 different rat organs and tissues.</title>
        <authorList>
            <person name="Lundby A."/>
            <person name="Secher A."/>
            <person name="Lage K."/>
            <person name="Nordsborg N.B."/>
            <person name="Dmytriyev A."/>
            <person name="Lundby C."/>
            <person name="Olsen J.V."/>
        </authorList>
    </citation>
    <scope>PHOSPHORYLATION [LARGE SCALE ANALYSIS] AT SER-253</scope>
    <scope>IDENTIFICATION BY MASS SPECTROMETRY [LARGE SCALE ANALYSIS]</scope>
</reference>
<keyword id="KW-0165">Cleavage on pair of basic residues</keyword>
<keyword id="KW-0968">Cytoplasmic vesicle</keyword>
<keyword id="KW-0903">Direct protein sequencing</keyword>
<keyword id="KW-1015">Disulfide bond</keyword>
<keyword id="KW-0257">Endorphin</keyword>
<keyword id="KW-0527">Neuropeptide</keyword>
<keyword id="KW-0555">Opioid peptide</keyword>
<keyword id="KW-0597">Phosphoprotein</keyword>
<keyword id="KW-1185">Reference proteome</keyword>
<keyword id="KW-0964">Secreted</keyword>
<keyword id="KW-0732">Signal</keyword>
<accession>P04094</accession>
<accession>Q53X05</accession>
<sequence length="269" mass="30932">MAQFLRLCIWLLALGSCLLATVQADCSQDCAKCSYRLVRPGDINFLACTLECEGQLPSFKIWETCKDLLQVSKPEFPWDNIDMYKDSSKQDESHLLAKKYGGFMKRYGGFMKKMDELYPVEPEEEANGGEILAKRYGGFMKKDADEGDTLANSSDLLKELLGTGDNRAKDSHQQESTNNDEDSTSKRYGGFMRGLKRSPQLEDEAKELQKRYGGFMRRVGRPEWWMDYQKRYGGFLKRFAESLPSDEEGESYSKEVPEMEKRYGGFMRF</sequence>
<dbReference type="EMBL" id="K02807">
    <property type="protein sequence ID" value="AAA60734.1"/>
    <property type="molecule type" value="Genomic_DNA"/>
</dbReference>
<dbReference type="EMBL" id="M28263">
    <property type="protein sequence ID" value="AAA41115.1"/>
    <property type="molecule type" value="mRNA"/>
</dbReference>
<dbReference type="EMBL" id="Y07503">
    <property type="protein sequence ID" value="CAA68804.1"/>
    <property type="molecule type" value="mRNA"/>
</dbReference>
<dbReference type="EMBL" id="S49491">
    <property type="protein sequence ID" value="AAB24022.1"/>
    <property type="molecule type" value="mRNA"/>
</dbReference>
<dbReference type="EMBL" id="BC083563">
    <property type="protein sequence ID" value="AAH83563.1"/>
    <property type="molecule type" value="mRNA"/>
</dbReference>
<dbReference type="PIR" id="A92464">
    <property type="entry name" value="EQRTA"/>
</dbReference>
<dbReference type="RefSeq" id="NP_001416509.1">
    <property type="nucleotide sequence ID" value="NM_001429580.1"/>
</dbReference>
<dbReference type="RefSeq" id="NP_058835.2">
    <property type="nucleotide sequence ID" value="NM_017139.3"/>
</dbReference>
<dbReference type="RefSeq" id="XP_006237897.1">
    <property type="nucleotide sequence ID" value="XM_006237835.1"/>
</dbReference>
<dbReference type="FunCoup" id="P04094">
    <property type="interactions" value="495"/>
</dbReference>
<dbReference type="STRING" id="10116.ENSRNOP00000074581"/>
<dbReference type="GlyGen" id="P04094">
    <property type="glycosylation" value="1 site, 2 N-linked;o-linked glycans (1 site)"/>
</dbReference>
<dbReference type="iPTMnet" id="P04094"/>
<dbReference type="PhosphoSitePlus" id="P04094"/>
<dbReference type="PaxDb" id="10116-ENSRNOP00000011892"/>
<dbReference type="Ensembl" id="ENSRNOT00000011892.8">
    <property type="protein sequence ID" value="ENSRNOP00000011892.4"/>
    <property type="gene ID" value="ENSRNOG00000008943.8"/>
</dbReference>
<dbReference type="GeneID" id="29237"/>
<dbReference type="KEGG" id="rno:29237"/>
<dbReference type="UCSC" id="RGD:68946">
    <property type="organism name" value="rat"/>
</dbReference>
<dbReference type="AGR" id="RGD:68946"/>
<dbReference type="CTD" id="5179"/>
<dbReference type="RGD" id="68946">
    <property type="gene designation" value="Penk"/>
</dbReference>
<dbReference type="eggNOG" id="ENOG502QWWK">
    <property type="taxonomic scope" value="Eukaryota"/>
</dbReference>
<dbReference type="GeneTree" id="ENSGT00950000183149"/>
<dbReference type="InParanoid" id="P04094"/>
<dbReference type="OMA" id="NPEAGHY"/>
<dbReference type="OrthoDB" id="9928775at2759"/>
<dbReference type="PhylomeDB" id="P04094"/>
<dbReference type="TreeFam" id="TF332620"/>
<dbReference type="Reactome" id="R-RNO-375276">
    <property type="pathway name" value="Peptide ligand-binding receptors"/>
</dbReference>
<dbReference type="Reactome" id="R-RNO-381426">
    <property type="pathway name" value="Regulation of Insulin-like Growth Factor (IGF) transport and uptake by Insulin-like Growth Factor Binding Proteins (IGFBPs)"/>
</dbReference>
<dbReference type="Reactome" id="R-RNO-418594">
    <property type="pathway name" value="G alpha (i) signalling events"/>
</dbReference>
<dbReference type="Reactome" id="R-RNO-8957275">
    <property type="pathway name" value="Post-translational protein phosphorylation"/>
</dbReference>
<dbReference type="PRO" id="PR:P04094"/>
<dbReference type="Proteomes" id="UP000002494">
    <property type="component" value="Chromosome 5"/>
</dbReference>
<dbReference type="Bgee" id="ENSRNOG00000008943">
    <property type="expression patterns" value="Expressed in cerebellum and 18 other cell types or tissues"/>
</dbReference>
<dbReference type="GO" id="GO:0030424">
    <property type="term" value="C:axon"/>
    <property type="evidence" value="ECO:0000314"/>
    <property type="project" value="RGD"/>
</dbReference>
<dbReference type="GO" id="GO:0043679">
    <property type="term" value="C:axon terminus"/>
    <property type="evidence" value="ECO:0000314"/>
    <property type="project" value="RGD"/>
</dbReference>
<dbReference type="GO" id="GO:0070852">
    <property type="term" value="C:cell body fiber"/>
    <property type="evidence" value="ECO:0000314"/>
    <property type="project" value="RGD"/>
</dbReference>
<dbReference type="GO" id="GO:0034466">
    <property type="term" value="C:chromaffin granule lumen"/>
    <property type="evidence" value="ECO:0007669"/>
    <property type="project" value="UniProtKB-SubCell"/>
</dbReference>
<dbReference type="GO" id="GO:0030425">
    <property type="term" value="C:dendrite"/>
    <property type="evidence" value="ECO:0000314"/>
    <property type="project" value="RGD"/>
</dbReference>
<dbReference type="GO" id="GO:0005576">
    <property type="term" value="C:extracellular region"/>
    <property type="evidence" value="ECO:0007669"/>
    <property type="project" value="UniProtKB-SubCell"/>
</dbReference>
<dbReference type="GO" id="GO:0043025">
    <property type="term" value="C:neuronal cell body"/>
    <property type="evidence" value="ECO:0000314"/>
    <property type="project" value="RGD"/>
</dbReference>
<dbReference type="GO" id="GO:0099013">
    <property type="term" value="C:neuronal dense core vesicle lumen"/>
    <property type="evidence" value="ECO:0000314"/>
    <property type="project" value="SynGO"/>
</dbReference>
<dbReference type="GO" id="GO:0043204">
    <property type="term" value="C:perikaryon"/>
    <property type="evidence" value="ECO:0000314"/>
    <property type="project" value="RGD"/>
</dbReference>
<dbReference type="GO" id="GO:0005886">
    <property type="term" value="C:plasma membrane"/>
    <property type="evidence" value="ECO:0000318"/>
    <property type="project" value="GO_Central"/>
</dbReference>
<dbReference type="GO" id="GO:0032280">
    <property type="term" value="C:symmetric synapse"/>
    <property type="evidence" value="ECO:0000314"/>
    <property type="project" value="RGD"/>
</dbReference>
<dbReference type="GO" id="GO:0034592">
    <property type="term" value="C:synaptic vesicle lumen"/>
    <property type="evidence" value="ECO:0000314"/>
    <property type="project" value="SynGO"/>
</dbReference>
<dbReference type="GO" id="GO:0001515">
    <property type="term" value="F:opioid peptide activity"/>
    <property type="evidence" value="ECO:0007669"/>
    <property type="project" value="UniProtKB-KW"/>
</dbReference>
<dbReference type="GO" id="GO:0048018">
    <property type="term" value="F:receptor ligand activity"/>
    <property type="evidence" value="ECO:0000266"/>
    <property type="project" value="RGD"/>
</dbReference>
<dbReference type="GO" id="GO:0002118">
    <property type="term" value="P:aggressive behavior"/>
    <property type="evidence" value="ECO:0000266"/>
    <property type="project" value="RGD"/>
</dbReference>
<dbReference type="GO" id="GO:0001662">
    <property type="term" value="P:behavioral fear response"/>
    <property type="evidence" value="ECO:0000266"/>
    <property type="project" value="RGD"/>
</dbReference>
<dbReference type="GO" id="GO:0071320">
    <property type="term" value="P:cellular response to cAMP"/>
    <property type="evidence" value="ECO:0000270"/>
    <property type="project" value="RGD"/>
</dbReference>
<dbReference type="GO" id="GO:0034599">
    <property type="term" value="P:cellular response to oxidative stress"/>
    <property type="evidence" value="ECO:0000270"/>
    <property type="project" value="RGD"/>
</dbReference>
<dbReference type="GO" id="GO:0071560">
    <property type="term" value="P:cellular response to transforming growth factor beta stimulus"/>
    <property type="evidence" value="ECO:0000270"/>
    <property type="project" value="RGD"/>
</dbReference>
<dbReference type="GO" id="GO:0098586">
    <property type="term" value="P:cellular response to virus"/>
    <property type="evidence" value="ECO:0000270"/>
    <property type="project" value="RGD"/>
</dbReference>
<dbReference type="GO" id="GO:0071305">
    <property type="term" value="P:cellular response to vitamin D"/>
    <property type="evidence" value="ECO:0000270"/>
    <property type="project" value="RGD"/>
</dbReference>
<dbReference type="GO" id="GO:0007268">
    <property type="term" value="P:chemical synaptic transmission"/>
    <property type="evidence" value="ECO:0000318"/>
    <property type="project" value="GO_Central"/>
</dbReference>
<dbReference type="GO" id="GO:0038003">
    <property type="term" value="P:G protein-coupled opioid receptor signaling pathway"/>
    <property type="evidence" value="ECO:0000266"/>
    <property type="project" value="RGD"/>
</dbReference>
<dbReference type="GO" id="GO:0051867">
    <property type="term" value="P:general adaptation syndrome, behavioral process"/>
    <property type="evidence" value="ECO:0000270"/>
    <property type="project" value="RGD"/>
</dbReference>
<dbReference type="GO" id="GO:0014009">
    <property type="term" value="P:glial cell proliferation"/>
    <property type="evidence" value="ECO:0000270"/>
    <property type="project" value="RGD"/>
</dbReference>
<dbReference type="GO" id="GO:0007626">
    <property type="term" value="P:locomotory behavior"/>
    <property type="evidence" value="ECO:0000266"/>
    <property type="project" value="RGD"/>
</dbReference>
<dbReference type="GO" id="GO:0035641">
    <property type="term" value="P:locomotory exploration behavior"/>
    <property type="evidence" value="ECO:0000315"/>
    <property type="project" value="RGD"/>
</dbReference>
<dbReference type="GO" id="GO:0007218">
    <property type="term" value="P:neuropeptide signaling pathway"/>
    <property type="evidence" value="ECO:0000318"/>
    <property type="project" value="GO_Central"/>
</dbReference>
<dbReference type="GO" id="GO:0001649">
    <property type="term" value="P:osteoblast differentiation"/>
    <property type="evidence" value="ECO:0000270"/>
    <property type="project" value="RGD"/>
</dbReference>
<dbReference type="GO" id="GO:2000987">
    <property type="term" value="P:positive regulation of behavioral fear response"/>
    <property type="evidence" value="ECO:0000315"/>
    <property type="project" value="RGD"/>
</dbReference>
<dbReference type="GO" id="GO:0009617">
    <property type="term" value="P:response to bacterium"/>
    <property type="evidence" value="ECO:0000266"/>
    <property type="project" value="RGD"/>
</dbReference>
<dbReference type="GO" id="GO:0051592">
    <property type="term" value="P:response to calcium ion"/>
    <property type="evidence" value="ECO:0000270"/>
    <property type="project" value="RGD"/>
</dbReference>
<dbReference type="GO" id="GO:0071871">
    <property type="term" value="P:response to epinephrine"/>
    <property type="evidence" value="ECO:0000270"/>
    <property type="project" value="RGD"/>
</dbReference>
<dbReference type="GO" id="GO:0032355">
    <property type="term" value="P:response to estradiol"/>
    <property type="evidence" value="ECO:0000270"/>
    <property type="project" value="RGD"/>
</dbReference>
<dbReference type="GO" id="GO:0045471">
    <property type="term" value="P:response to ethanol"/>
    <property type="evidence" value="ECO:0000314"/>
    <property type="project" value="RGD"/>
</dbReference>
<dbReference type="GO" id="GO:0001666">
    <property type="term" value="P:response to hypoxia"/>
    <property type="evidence" value="ECO:0000270"/>
    <property type="project" value="RGD"/>
</dbReference>
<dbReference type="GO" id="GO:0035902">
    <property type="term" value="P:response to immobilization stress"/>
    <property type="evidence" value="ECO:0000270"/>
    <property type="project" value="RGD"/>
</dbReference>
<dbReference type="GO" id="GO:0032496">
    <property type="term" value="P:response to lipopolysaccharide"/>
    <property type="evidence" value="ECO:0000270"/>
    <property type="project" value="RGD"/>
</dbReference>
<dbReference type="GO" id="GO:0035094">
    <property type="term" value="P:response to nicotine"/>
    <property type="evidence" value="ECO:0000270"/>
    <property type="project" value="RGD"/>
</dbReference>
<dbReference type="GO" id="GO:0009636">
    <property type="term" value="P:response to toxic substance"/>
    <property type="evidence" value="ECO:0000270"/>
    <property type="project" value="RGD"/>
</dbReference>
<dbReference type="GO" id="GO:0007600">
    <property type="term" value="P:sensory perception"/>
    <property type="evidence" value="ECO:0000318"/>
    <property type="project" value="GO_Central"/>
</dbReference>
<dbReference type="GO" id="GO:0019233">
    <property type="term" value="P:sensory perception of pain"/>
    <property type="evidence" value="ECO:0000266"/>
    <property type="project" value="RGD"/>
</dbReference>
<dbReference type="GO" id="GO:0001964">
    <property type="term" value="P:startle response"/>
    <property type="evidence" value="ECO:0000266"/>
    <property type="project" value="RGD"/>
</dbReference>
<dbReference type="GO" id="GO:0099538">
    <property type="term" value="P:synaptic signaling via neuropeptide"/>
    <property type="evidence" value="ECO:0000315"/>
    <property type="project" value="SynGO"/>
</dbReference>
<dbReference type="GO" id="GO:0019226">
    <property type="term" value="P:transmission of nerve impulse"/>
    <property type="evidence" value="ECO:0000266"/>
    <property type="project" value="RGD"/>
</dbReference>
<dbReference type="InterPro" id="IPR006024">
    <property type="entry name" value="Opioid_neupept"/>
</dbReference>
<dbReference type="InterPro" id="IPR000703">
    <property type="entry name" value="Proenkphlin_A"/>
</dbReference>
<dbReference type="PANTHER" id="PTHR11438">
    <property type="entry name" value="PROENKEPHALIN"/>
    <property type="match status" value="1"/>
</dbReference>
<dbReference type="PANTHER" id="PTHR11438:SF3">
    <property type="entry name" value="PROENKEPHALIN-A"/>
    <property type="match status" value="1"/>
</dbReference>
<dbReference type="Pfam" id="PF01160">
    <property type="entry name" value="Opiods_neuropep"/>
    <property type="match status" value="1"/>
</dbReference>
<dbReference type="PRINTS" id="PR01028">
    <property type="entry name" value="OPIOIDPRCRSR"/>
</dbReference>
<dbReference type="PRINTS" id="PR01029">
    <property type="entry name" value="PENKAPRCRSR"/>
</dbReference>
<dbReference type="PROSITE" id="PS01252">
    <property type="entry name" value="OPIOIDS_PRECURSOR"/>
    <property type="match status" value="1"/>
</dbReference>
<name>PENK_RAT</name>
<evidence type="ECO:0000250" key="1">
    <source>
        <dbReference type="UniProtKB" id="P01210"/>
    </source>
</evidence>
<evidence type="ECO:0000250" key="2">
    <source>
        <dbReference type="UniProtKB" id="P01211"/>
    </source>
</evidence>
<evidence type="ECO:0000250" key="3">
    <source>
        <dbReference type="UniProtKB" id="P22005"/>
    </source>
</evidence>
<evidence type="ECO:0000255" key="4"/>
<evidence type="ECO:0000256" key="5">
    <source>
        <dbReference type="SAM" id="MobiDB-lite"/>
    </source>
</evidence>
<evidence type="ECO:0000269" key="6">
    <source>
    </source>
</evidence>
<evidence type="ECO:0000269" key="7">
    <source>
    </source>
</evidence>
<evidence type="ECO:0000269" key="8">
    <source>
    </source>
</evidence>
<evidence type="ECO:0000269" key="9">
    <source>
    </source>
</evidence>
<evidence type="ECO:0000269" key="10">
    <source>
    </source>
</evidence>
<evidence type="ECO:0000269" key="11">
    <source>
    </source>
</evidence>
<evidence type="ECO:0000303" key="12">
    <source>
    </source>
</evidence>
<evidence type="ECO:0000305" key="13"/>
<evidence type="ECO:0007744" key="14">
    <source>
    </source>
</evidence>